<proteinExistence type="inferred from homology"/>
<gene>
    <name evidence="1" type="primary">rpmI</name>
    <name type="ordered locus">SSU05_1269</name>
</gene>
<reference key="1">
    <citation type="journal article" date="2007" name="PLoS ONE">
        <title>A glimpse of streptococcal toxic shock syndrome from comparative genomics of S. suis 2 Chinese isolates.</title>
        <authorList>
            <person name="Chen C."/>
            <person name="Tang J."/>
            <person name="Dong W."/>
            <person name="Wang C."/>
            <person name="Feng Y."/>
            <person name="Wang J."/>
            <person name="Zheng F."/>
            <person name="Pan X."/>
            <person name="Liu D."/>
            <person name="Li M."/>
            <person name="Song Y."/>
            <person name="Zhu X."/>
            <person name="Sun H."/>
            <person name="Feng T."/>
            <person name="Guo Z."/>
            <person name="Ju A."/>
            <person name="Ge J."/>
            <person name="Dong Y."/>
            <person name="Sun W."/>
            <person name="Jiang Y."/>
            <person name="Wang J."/>
            <person name="Yan J."/>
            <person name="Yang H."/>
            <person name="Wang X."/>
            <person name="Gao G.F."/>
            <person name="Yang R."/>
            <person name="Wang J."/>
            <person name="Yu J."/>
        </authorList>
    </citation>
    <scope>NUCLEOTIDE SEQUENCE [LARGE SCALE GENOMIC DNA]</scope>
    <source>
        <strain>05ZYH33</strain>
    </source>
</reference>
<protein>
    <recommendedName>
        <fullName evidence="1">Large ribosomal subunit protein bL35</fullName>
    </recommendedName>
    <alternativeName>
        <fullName evidence="3">50S ribosomal protein L35</fullName>
    </alternativeName>
</protein>
<feature type="chain" id="PRO_1000050777" description="Large ribosomal subunit protein bL35">
    <location>
        <begin position="1"/>
        <end position="66"/>
    </location>
</feature>
<feature type="region of interest" description="Disordered" evidence="2">
    <location>
        <begin position="1"/>
        <end position="22"/>
    </location>
</feature>
<feature type="compositionally biased region" description="Basic residues" evidence="2">
    <location>
        <begin position="1"/>
        <end position="16"/>
    </location>
</feature>
<comment type="similarity">
    <text evidence="1">Belongs to the bacterial ribosomal protein bL35 family.</text>
</comment>
<dbReference type="EMBL" id="CP000407">
    <property type="protein sequence ID" value="ABP90235.1"/>
    <property type="molecule type" value="Genomic_DNA"/>
</dbReference>
<dbReference type="SMR" id="A4VVU6"/>
<dbReference type="STRING" id="391295.SSU05_1269"/>
<dbReference type="KEGG" id="ssu:SSU05_1269"/>
<dbReference type="eggNOG" id="COG0291">
    <property type="taxonomic scope" value="Bacteria"/>
</dbReference>
<dbReference type="HOGENOM" id="CLU_169643_3_0_9"/>
<dbReference type="GO" id="GO:0022625">
    <property type="term" value="C:cytosolic large ribosomal subunit"/>
    <property type="evidence" value="ECO:0007669"/>
    <property type="project" value="TreeGrafter"/>
</dbReference>
<dbReference type="GO" id="GO:0003735">
    <property type="term" value="F:structural constituent of ribosome"/>
    <property type="evidence" value="ECO:0007669"/>
    <property type="project" value="InterPro"/>
</dbReference>
<dbReference type="GO" id="GO:0006412">
    <property type="term" value="P:translation"/>
    <property type="evidence" value="ECO:0007669"/>
    <property type="project" value="UniProtKB-UniRule"/>
</dbReference>
<dbReference type="FunFam" id="4.10.410.60:FF:000001">
    <property type="entry name" value="50S ribosomal protein L35"/>
    <property type="match status" value="1"/>
</dbReference>
<dbReference type="Gene3D" id="4.10.410.60">
    <property type="match status" value="1"/>
</dbReference>
<dbReference type="HAMAP" id="MF_00514">
    <property type="entry name" value="Ribosomal_bL35"/>
    <property type="match status" value="1"/>
</dbReference>
<dbReference type="InterPro" id="IPR001706">
    <property type="entry name" value="Ribosomal_bL35"/>
</dbReference>
<dbReference type="InterPro" id="IPR021137">
    <property type="entry name" value="Ribosomal_bL35-like"/>
</dbReference>
<dbReference type="InterPro" id="IPR018265">
    <property type="entry name" value="Ribosomal_bL35_CS"/>
</dbReference>
<dbReference type="InterPro" id="IPR037229">
    <property type="entry name" value="Ribosomal_bL35_sf"/>
</dbReference>
<dbReference type="NCBIfam" id="TIGR00001">
    <property type="entry name" value="rpmI_bact"/>
    <property type="match status" value="1"/>
</dbReference>
<dbReference type="PANTHER" id="PTHR33343">
    <property type="entry name" value="54S RIBOSOMAL PROTEIN BL35M"/>
    <property type="match status" value="1"/>
</dbReference>
<dbReference type="PANTHER" id="PTHR33343:SF1">
    <property type="entry name" value="LARGE RIBOSOMAL SUBUNIT PROTEIN BL35M"/>
    <property type="match status" value="1"/>
</dbReference>
<dbReference type="Pfam" id="PF01632">
    <property type="entry name" value="Ribosomal_L35p"/>
    <property type="match status" value="1"/>
</dbReference>
<dbReference type="PRINTS" id="PR00064">
    <property type="entry name" value="RIBOSOMALL35"/>
</dbReference>
<dbReference type="SUPFAM" id="SSF143034">
    <property type="entry name" value="L35p-like"/>
    <property type="match status" value="1"/>
</dbReference>
<dbReference type="PROSITE" id="PS00936">
    <property type="entry name" value="RIBOSOMAL_L35"/>
    <property type="match status" value="1"/>
</dbReference>
<name>RL35_STRSY</name>
<keyword id="KW-0687">Ribonucleoprotein</keyword>
<keyword id="KW-0689">Ribosomal protein</keyword>
<sequence length="66" mass="7691">MPKQKTHRASAKRFKRTGSGGLKRFRAYTSHRFHGKTKKQRRHLRKAGMVHAGDFKRIKSMLTGLK</sequence>
<organism>
    <name type="scientific">Streptococcus suis (strain 05ZYH33)</name>
    <dbReference type="NCBI Taxonomy" id="391295"/>
    <lineage>
        <taxon>Bacteria</taxon>
        <taxon>Bacillati</taxon>
        <taxon>Bacillota</taxon>
        <taxon>Bacilli</taxon>
        <taxon>Lactobacillales</taxon>
        <taxon>Streptococcaceae</taxon>
        <taxon>Streptococcus</taxon>
    </lineage>
</organism>
<accession>A4VVU6</accession>
<evidence type="ECO:0000255" key="1">
    <source>
        <dbReference type="HAMAP-Rule" id="MF_00514"/>
    </source>
</evidence>
<evidence type="ECO:0000256" key="2">
    <source>
        <dbReference type="SAM" id="MobiDB-lite"/>
    </source>
</evidence>
<evidence type="ECO:0000305" key="3"/>